<dbReference type="EC" id="5.3.1.8"/>
<dbReference type="EMBL" id="AE016817">
    <property type="protein sequence ID" value="AAS51923.1"/>
    <property type="molecule type" value="Genomic_DNA"/>
</dbReference>
<dbReference type="RefSeq" id="NP_984099.1">
    <property type="nucleotide sequence ID" value="NM_209452.1"/>
</dbReference>
<dbReference type="SMR" id="Q75AB5"/>
<dbReference type="FunCoup" id="Q75AB5">
    <property type="interactions" value="879"/>
</dbReference>
<dbReference type="STRING" id="284811.Q75AB5"/>
<dbReference type="EnsemblFungi" id="AAS51923">
    <property type="protein sequence ID" value="AAS51923"/>
    <property type="gene ID" value="AGOS_ADR003C"/>
</dbReference>
<dbReference type="GeneID" id="4620247"/>
<dbReference type="KEGG" id="ago:AGOS_ADR003C"/>
<dbReference type="eggNOG" id="KOG2757">
    <property type="taxonomic scope" value="Eukaryota"/>
</dbReference>
<dbReference type="HOGENOM" id="CLU_026967_0_0_1"/>
<dbReference type="InParanoid" id="Q75AB5"/>
<dbReference type="OMA" id="DIGLFCG"/>
<dbReference type="OrthoDB" id="6605218at2759"/>
<dbReference type="UniPathway" id="UPA00126">
    <property type="reaction ID" value="UER00423"/>
</dbReference>
<dbReference type="Proteomes" id="UP000000591">
    <property type="component" value="Chromosome IV"/>
</dbReference>
<dbReference type="GO" id="GO:0005829">
    <property type="term" value="C:cytosol"/>
    <property type="evidence" value="ECO:0000318"/>
    <property type="project" value="GO_Central"/>
</dbReference>
<dbReference type="GO" id="GO:0004476">
    <property type="term" value="F:mannose-6-phosphate isomerase activity"/>
    <property type="evidence" value="ECO:0000318"/>
    <property type="project" value="GO_Central"/>
</dbReference>
<dbReference type="GO" id="GO:0008270">
    <property type="term" value="F:zinc ion binding"/>
    <property type="evidence" value="ECO:0007669"/>
    <property type="project" value="InterPro"/>
</dbReference>
<dbReference type="GO" id="GO:0005975">
    <property type="term" value="P:carbohydrate metabolic process"/>
    <property type="evidence" value="ECO:0007669"/>
    <property type="project" value="InterPro"/>
</dbReference>
<dbReference type="GO" id="GO:0000032">
    <property type="term" value="P:cell wall mannoprotein biosynthetic process"/>
    <property type="evidence" value="ECO:0007669"/>
    <property type="project" value="EnsemblFungi"/>
</dbReference>
<dbReference type="GO" id="GO:0009298">
    <property type="term" value="P:GDP-mannose biosynthetic process"/>
    <property type="evidence" value="ECO:0000318"/>
    <property type="project" value="GO_Central"/>
</dbReference>
<dbReference type="GO" id="GO:0006486">
    <property type="term" value="P:protein glycosylation"/>
    <property type="evidence" value="ECO:0007669"/>
    <property type="project" value="EnsemblFungi"/>
</dbReference>
<dbReference type="CDD" id="cd07011">
    <property type="entry name" value="cupin_PMI_type_I_N"/>
    <property type="match status" value="1"/>
</dbReference>
<dbReference type="FunFam" id="1.10.441.10:FF:000001">
    <property type="entry name" value="Mannose-6-phosphate isomerase"/>
    <property type="match status" value="1"/>
</dbReference>
<dbReference type="Gene3D" id="2.60.120.10">
    <property type="entry name" value="Jelly Rolls"/>
    <property type="match status" value="2"/>
</dbReference>
<dbReference type="Gene3D" id="1.10.441.10">
    <property type="entry name" value="Phosphomannose Isomerase, domain 2"/>
    <property type="match status" value="1"/>
</dbReference>
<dbReference type="InterPro" id="IPR001250">
    <property type="entry name" value="Man6P_Isoase-1"/>
</dbReference>
<dbReference type="InterPro" id="IPR016305">
    <property type="entry name" value="Mannose-6-P_Isomerase"/>
</dbReference>
<dbReference type="InterPro" id="IPR018050">
    <property type="entry name" value="Pmannose_isomerase-type1_CS"/>
</dbReference>
<dbReference type="InterPro" id="IPR046456">
    <property type="entry name" value="PMI_typeI_C"/>
</dbReference>
<dbReference type="InterPro" id="IPR046457">
    <property type="entry name" value="PMI_typeI_cat"/>
</dbReference>
<dbReference type="InterPro" id="IPR046458">
    <property type="entry name" value="PMI_typeI_hel"/>
</dbReference>
<dbReference type="InterPro" id="IPR014710">
    <property type="entry name" value="RmlC-like_jellyroll"/>
</dbReference>
<dbReference type="InterPro" id="IPR011051">
    <property type="entry name" value="RmlC_Cupin_sf"/>
</dbReference>
<dbReference type="NCBIfam" id="TIGR00218">
    <property type="entry name" value="manA"/>
    <property type="match status" value="1"/>
</dbReference>
<dbReference type="PANTHER" id="PTHR10309">
    <property type="entry name" value="MANNOSE-6-PHOSPHATE ISOMERASE"/>
    <property type="match status" value="1"/>
</dbReference>
<dbReference type="PANTHER" id="PTHR10309:SF0">
    <property type="entry name" value="MANNOSE-6-PHOSPHATE ISOMERASE"/>
    <property type="match status" value="1"/>
</dbReference>
<dbReference type="Pfam" id="PF01238">
    <property type="entry name" value="PMI_typeI_C"/>
    <property type="match status" value="1"/>
</dbReference>
<dbReference type="Pfam" id="PF20511">
    <property type="entry name" value="PMI_typeI_cat"/>
    <property type="match status" value="1"/>
</dbReference>
<dbReference type="Pfam" id="PF20512">
    <property type="entry name" value="PMI_typeI_hel"/>
    <property type="match status" value="1"/>
</dbReference>
<dbReference type="PIRSF" id="PIRSF001480">
    <property type="entry name" value="Mannose-6-phosphate_isomerase"/>
    <property type="match status" value="1"/>
</dbReference>
<dbReference type="PRINTS" id="PR00714">
    <property type="entry name" value="MAN6PISMRASE"/>
</dbReference>
<dbReference type="SUPFAM" id="SSF51182">
    <property type="entry name" value="RmlC-like cupins"/>
    <property type="match status" value="1"/>
</dbReference>
<dbReference type="PROSITE" id="PS00965">
    <property type="entry name" value="PMI_I_1"/>
    <property type="match status" value="1"/>
</dbReference>
<dbReference type="PROSITE" id="PS00966">
    <property type="entry name" value="PMI_I_2"/>
    <property type="match status" value="1"/>
</dbReference>
<feature type="chain" id="PRO_0000194239" description="Mannose-6-phosphate isomerase">
    <location>
        <begin position="1"/>
        <end position="429"/>
    </location>
</feature>
<feature type="active site" evidence="1">
    <location>
        <position position="300"/>
    </location>
</feature>
<feature type="binding site" evidence="1">
    <location>
        <position position="109"/>
    </location>
    <ligand>
        <name>Zn(2+)</name>
        <dbReference type="ChEBI" id="CHEBI:29105"/>
    </ligand>
</feature>
<feature type="binding site" evidence="1">
    <location>
        <position position="111"/>
    </location>
    <ligand>
        <name>Zn(2+)</name>
        <dbReference type="ChEBI" id="CHEBI:29105"/>
    </ligand>
</feature>
<feature type="binding site" evidence="1">
    <location>
        <position position="136"/>
    </location>
    <ligand>
        <name>Zn(2+)</name>
        <dbReference type="ChEBI" id="CHEBI:29105"/>
    </ligand>
</feature>
<feature type="binding site" evidence="1">
    <location>
        <position position="281"/>
    </location>
    <ligand>
        <name>Zn(2+)</name>
        <dbReference type="ChEBI" id="CHEBI:29105"/>
    </ligand>
</feature>
<keyword id="KW-0963">Cytoplasm</keyword>
<keyword id="KW-0413">Isomerase</keyword>
<keyword id="KW-0479">Metal-binding</keyword>
<keyword id="KW-1185">Reference proteome</keyword>
<keyword id="KW-0862">Zinc</keyword>
<organism>
    <name type="scientific">Eremothecium gossypii (strain ATCC 10895 / CBS 109.51 / FGSC 9923 / NRRL Y-1056)</name>
    <name type="common">Yeast</name>
    <name type="synonym">Ashbya gossypii</name>
    <dbReference type="NCBI Taxonomy" id="284811"/>
    <lineage>
        <taxon>Eukaryota</taxon>
        <taxon>Fungi</taxon>
        <taxon>Dikarya</taxon>
        <taxon>Ascomycota</taxon>
        <taxon>Saccharomycotina</taxon>
        <taxon>Saccharomycetes</taxon>
        <taxon>Saccharomycetales</taxon>
        <taxon>Saccharomycetaceae</taxon>
        <taxon>Eremothecium</taxon>
    </lineage>
</organism>
<name>MPI_EREGS</name>
<comment type="function">
    <text evidence="1">Involved in the synthesis of the GDP-mannose and dolichol-phosphate-mannose required for a number of critical mannosyl transfer reactions.</text>
</comment>
<comment type="catalytic activity">
    <reaction>
        <text>D-mannose 6-phosphate = D-fructose 6-phosphate</text>
        <dbReference type="Rhea" id="RHEA:12356"/>
        <dbReference type="ChEBI" id="CHEBI:58735"/>
        <dbReference type="ChEBI" id="CHEBI:61527"/>
        <dbReference type="EC" id="5.3.1.8"/>
    </reaction>
</comment>
<comment type="cofactor">
    <cofactor evidence="1">
        <name>Zn(2+)</name>
        <dbReference type="ChEBI" id="CHEBI:29105"/>
    </cofactor>
    <text evidence="1">Binds 1 zinc ion per subunit.</text>
</comment>
<comment type="pathway">
    <text>Nucleotide-sugar biosynthesis; GDP-alpha-D-mannose biosynthesis; alpha-D-mannose 1-phosphate from D-fructose 6-phosphate: step 1/2.</text>
</comment>
<comment type="subcellular location">
    <subcellularLocation>
        <location evidence="1">Cytoplasm</location>
    </subcellularLocation>
</comment>
<comment type="similarity">
    <text evidence="2">Belongs to the mannose-6-phosphate isomerase type 1 family.</text>
</comment>
<sequence>MSAKLFRLDAGYQQYDWGKIGSSSAVAQYAANSDPSVQIEEDKPYAELWMGTHHKVPSRHHDTKVALSDLIAANPEGMLGSGNVEKFHSRKDLPFLFKVLSIEKVLSIQAHPDKNLGRRLHIQDPKNYPDDNHKPEMAIAISDFEGFCGFKPLEELAEELQRIPEFRSLVGEDIAAQFCAGIKVGAQEGSEEDKSNRKLLQSVFSNVMNASDDVIASHARHLVERAKQSPADFNNETLPALILRLNEQFPEDVGLFCGCLMLNHCVLKAGESIFLRAKDPHAYITGDIIECMAASDNVVRAGFTPKFKDVKNLVEMLTYSYDSVEDQKMKLLPFARSSGSGDSILYNPPIEEFAVLQTNFHGSTGTHHFDGLDGPSIVITTNGSGYIQSGDVRLKAEAGYVFFIAPHAEVDLQTEDSNFTTYRAFVEPN</sequence>
<proteinExistence type="inferred from homology"/>
<protein>
    <recommendedName>
        <fullName>Mannose-6-phosphate isomerase</fullName>
        <ecNumber>5.3.1.8</ecNumber>
    </recommendedName>
    <alternativeName>
        <fullName>Phosphohexomutase</fullName>
    </alternativeName>
    <alternativeName>
        <fullName>Phosphomannose isomerase</fullName>
        <shortName>PMI</shortName>
    </alternativeName>
</protein>
<evidence type="ECO:0000250" key="1"/>
<evidence type="ECO:0000305" key="2"/>
<accession>Q75AB5</accession>
<gene>
    <name type="primary">PMI1</name>
    <name type="synonym">PMI40</name>
    <name type="ordered locus">ADR003C</name>
</gene>
<reference key="1">
    <citation type="journal article" date="2004" name="Science">
        <title>The Ashbya gossypii genome as a tool for mapping the ancient Saccharomyces cerevisiae genome.</title>
        <authorList>
            <person name="Dietrich F.S."/>
            <person name="Voegeli S."/>
            <person name="Brachat S."/>
            <person name="Lerch A."/>
            <person name="Gates K."/>
            <person name="Steiner S."/>
            <person name="Mohr C."/>
            <person name="Poehlmann R."/>
            <person name="Luedi P."/>
            <person name="Choi S."/>
            <person name="Wing R.A."/>
            <person name="Flavier A."/>
            <person name="Gaffney T.D."/>
            <person name="Philippsen P."/>
        </authorList>
    </citation>
    <scope>NUCLEOTIDE SEQUENCE [LARGE SCALE GENOMIC DNA]</scope>
    <source>
        <strain>ATCC 10895 / CBS 109.51 / FGSC 9923 / NRRL Y-1056</strain>
    </source>
</reference>
<reference key="2">
    <citation type="journal article" date="2013" name="G3 (Bethesda)">
        <title>Genomes of Ashbya fungi isolated from insects reveal four mating-type loci, numerous translocations, lack of transposons, and distinct gene duplications.</title>
        <authorList>
            <person name="Dietrich F.S."/>
            <person name="Voegeli S."/>
            <person name="Kuo S."/>
            <person name="Philippsen P."/>
        </authorList>
    </citation>
    <scope>GENOME REANNOTATION</scope>
    <source>
        <strain>ATCC 10895 / CBS 109.51 / FGSC 9923 / NRRL Y-1056</strain>
    </source>
</reference>